<proteinExistence type="inferred from homology"/>
<keyword id="KW-0998">Cell outer membrane</keyword>
<keyword id="KW-0472">Membrane</keyword>
<keyword id="KW-1185">Reference proteome</keyword>
<keyword id="KW-0732">Signal</keyword>
<comment type="function">
    <text evidence="1">Together with LptE, is involved in the assembly of lipopolysaccharide (LPS) at the surface of the outer membrane.</text>
</comment>
<comment type="subunit">
    <text evidence="1">Component of the lipopolysaccharide transport and assembly complex. Interacts with LptE and LptA.</text>
</comment>
<comment type="subcellular location">
    <subcellularLocation>
        <location evidence="1">Cell outer membrane</location>
    </subcellularLocation>
</comment>
<comment type="similarity">
    <text evidence="1">Belongs to the LptD family.</text>
</comment>
<comment type="sequence caution" evidence="2">
    <conflict type="erroneous initiation">
        <sequence resource="EMBL-CDS" id="AAK03684"/>
    </conflict>
</comment>
<name>LPTD_PASMU</name>
<gene>
    <name evidence="1" type="primary">lptD</name>
    <name type="synonym">imp</name>
    <name type="synonym">ostA</name>
    <name type="ordered locus">PM1600</name>
</gene>
<feature type="signal peptide" evidence="1">
    <location>
        <begin position="1"/>
        <end position="24"/>
    </location>
</feature>
<feature type="chain" id="PRO_0000020283" description="LPS-assembly protein LptD">
    <location>
        <begin position="25"/>
        <end position="782"/>
    </location>
</feature>
<organism>
    <name type="scientific">Pasteurella multocida (strain Pm70)</name>
    <dbReference type="NCBI Taxonomy" id="272843"/>
    <lineage>
        <taxon>Bacteria</taxon>
        <taxon>Pseudomonadati</taxon>
        <taxon>Pseudomonadota</taxon>
        <taxon>Gammaproteobacteria</taxon>
        <taxon>Pasteurellales</taxon>
        <taxon>Pasteurellaceae</taxon>
        <taxon>Pasteurella</taxon>
    </lineage>
</organism>
<sequence>MKKNSYTRLSIAILSTLYSVSSLADLKSQCLAGVPHFTGELITGNPNDLPVYIEADQARLNQSVSASYEGNVEIQQGNRQLRAQRADISQQKQPNGLQRLAHVRGGFEYQDHQIQLKGEEAQVQLNTKNTDIKNADYQLVDRQGRGKAESIALREDYRLMTNAVFTSCLPQDNAWSIEAKEMRQHIQEEYAEMWHARFKVHGVPIFYTPYLQLPIGDRRRSGLLLPNFGTSNRDGYFYEQPFYWNIAPNLDATMTPKYMSKRGWQLNGEFRYLSPIGEGKIAGEYLKQDRLTDYRNRDRSRHLFYWTHHSSFLQNWRLNLDYTRVSDQRYFSDFDSAYGSSTDGYADQKFRVAYYQPHYNIAISAKQFQIFNEVDIGPYRALPQVDFNYYQNALFDSPLNFKLFSQVVHFDNKSPLMPKAWRFHAEPSINLPLSNRYGSLNIETKLYATHYQQTQGRAAEAEQVERKINRVLPQVKVDLQTVLASQQTFIEGYTQTLEPHVQYLYRPYKDQSNIGSKLNNAYLGFGYDSSLLQQDYFGLFRDRRYSGLDRIASANQFTVGGTTRIYDKKGNERFNFSAGQIYYLQDSRIDNSKENSTYGRSSSWSLASNWKINDQWRWQGSYQYDTRLNKSSLGNFTLEYNPTGNNIIQLSYRYASQQYIDQNLTSAANRYGQDIKQLGLTVAWALTDQWAVVARHYQDLALRKPVEQYLGLEYSTCCWAINVGARRSVTSKENQTANQIFYDKSIGINIELRGLGRDDHKGNIEKMLQRGKLPYLQAFSLY</sequence>
<dbReference type="EMBL" id="AE004439">
    <property type="protein sequence ID" value="AAK03684.1"/>
    <property type="status" value="ALT_INIT"/>
    <property type="molecule type" value="Genomic_DNA"/>
</dbReference>
<dbReference type="RefSeq" id="WP_016533641.1">
    <property type="nucleotide sequence ID" value="NC_002663.1"/>
</dbReference>
<dbReference type="SMR" id="Q9CKL2"/>
<dbReference type="STRING" id="272843.PM1600"/>
<dbReference type="EnsemblBacteria" id="AAK03684">
    <property type="protein sequence ID" value="AAK03684"/>
    <property type="gene ID" value="PM1600"/>
</dbReference>
<dbReference type="KEGG" id="pmu:PM1600"/>
<dbReference type="PATRIC" id="fig|272843.6.peg.1619"/>
<dbReference type="HOGENOM" id="CLU_009039_2_0_6"/>
<dbReference type="OrthoDB" id="9760225at2"/>
<dbReference type="Proteomes" id="UP000000809">
    <property type="component" value="Chromosome"/>
</dbReference>
<dbReference type="GO" id="GO:0009279">
    <property type="term" value="C:cell outer membrane"/>
    <property type="evidence" value="ECO:0007669"/>
    <property type="project" value="UniProtKB-SubCell"/>
</dbReference>
<dbReference type="GO" id="GO:1990351">
    <property type="term" value="C:transporter complex"/>
    <property type="evidence" value="ECO:0007669"/>
    <property type="project" value="TreeGrafter"/>
</dbReference>
<dbReference type="GO" id="GO:0043165">
    <property type="term" value="P:Gram-negative-bacterium-type cell outer membrane assembly"/>
    <property type="evidence" value="ECO:0007669"/>
    <property type="project" value="UniProtKB-UniRule"/>
</dbReference>
<dbReference type="GO" id="GO:0015920">
    <property type="term" value="P:lipopolysaccharide transport"/>
    <property type="evidence" value="ECO:0007669"/>
    <property type="project" value="InterPro"/>
</dbReference>
<dbReference type="Gene3D" id="2.60.450.10">
    <property type="entry name" value="Lipopolysaccharide (LPS) transport protein A like domain"/>
    <property type="match status" value="1"/>
</dbReference>
<dbReference type="HAMAP" id="MF_01411">
    <property type="entry name" value="LPS_assembly_LptD"/>
    <property type="match status" value="1"/>
</dbReference>
<dbReference type="InterPro" id="IPR020889">
    <property type="entry name" value="LipoPS_assembly_LptD"/>
</dbReference>
<dbReference type="InterPro" id="IPR050218">
    <property type="entry name" value="LptD"/>
</dbReference>
<dbReference type="InterPro" id="IPR007543">
    <property type="entry name" value="LptD_C"/>
</dbReference>
<dbReference type="InterPro" id="IPR005653">
    <property type="entry name" value="OstA-like_N"/>
</dbReference>
<dbReference type="NCBIfam" id="NF002997">
    <property type="entry name" value="PRK03761.1"/>
    <property type="match status" value="1"/>
</dbReference>
<dbReference type="PANTHER" id="PTHR30189">
    <property type="entry name" value="LPS-ASSEMBLY PROTEIN"/>
    <property type="match status" value="1"/>
</dbReference>
<dbReference type="PANTHER" id="PTHR30189:SF1">
    <property type="entry name" value="LPS-ASSEMBLY PROTEIN LPTD"/>
    <property type="match status" value="1"/>
</dbReference>
<dbReference type="Pfam" id="PF04453">
    <property type="entry name" value="LptD"/>
    <property type="match status" value="1"/>
</dbReference>
<dbReference type="Pfam" id="PF03968">
    <property type="entry name" value="LptD_N"/>
    <property type="match status" value="1"/>
</dbReference>
<dbReference type="SUPFAM" id="SSF56935">
    <property type="entry name" value="Porins"/>
    <property type="match status" value="1"/>
</dbReference>
<accession>Q9CKL2</accession>
<protein>
    <recommendedName>
        <fullName evidence="1">LPS-assembly protein LptD</fullName>
    </recommendedName>
</protein>
<evidence type="ECO:0000255" key="1">
    <source>
        <dbReference type="HAMAP-Rule" id="MF_01411"/>
    </source>
</evidence>
<evidence type="ECO:0000305" key="2"/>
<reference key="1">
    <citation type="journal article" date="2001" name="Proc. Natl. Acad. Sci. U.S.A.">
        <title>Complete genomic sequence of Pasteurella multocida Pm70.</title>
        <authorList>
            <person name="May B.J."/>
            <person name="Zhang Q."/>
            <person name="Li L.L."/>
            <person name="Paustian M.L."/>
            <person name="Whittam T.S."/>
            <person name="Kapur V."/>
        </authorList>
    </citation>
    <scope>NUCLEOTIDE SEQUENCE [LARGE SCALE GENOMIC DNA]</scope>
    <source>
        <strain>Pm70</strain>
    </source>
</reference>